<comment type="function">
    <text evidence="1">Binds to DNA and alters its conformation. May be involved in regulation of gene expression, nucleoid organization and DNA protection.</text>
</comment>
<comment type="subunit">
    <text evidence="1">Homodimer.</text>
</comment>
<comment type="subcellular location">
    <subcellularLocation>
        <location evidence="1">Cytoplasm</location>
        <location evidence="1">Nucleoid</location>
    </subcellularLocation>
</comment>
<comment type="similarity">
    <text evidence="1">Belongs to the YbaB/EbfC family.</text>
</comment>
<evidence type="ECO:0000255" key="1">
    <source>
        <dbReference type="HAMAP-Rule" id="MF_00274"/>
    </source>
</evidence>
<accession>A8ERY0</accession>
<proteinExistence type="inferred from homology"/>
<gene>
    <name type="ordered locus">Abu_0429</name>
</gene>
<keyword id="KW-0963">Cytoplasm</keyword>
<keyword id="KW-0238">DNA-binding</keyword>
<keyword id="KW-1185">Reference proteome</keyword>
<dbReference type="EMBL" id="CP000361">
    <property type="protein sequence ID" value="ABV66704.1"/>
    <property type="molecule type" value="Genomic_DNA"/>
</dbReference>
<dbReference type="RefSeq" id="WP_012012250.1">
    <property type="nucleotide sequence ID" value="NC_009850.1"/>
</dbReference>
<dbReference type="SMR" id="A8ERY0"/>
<dbReference type="STRING" id="367737.Abu_0429"/>
<dbReference type="GeneID" id="24305205"/>
<dbReference type="KEGG" id="abu:Abu_0429"/>
<dbReference type="eggNOG" id="COG0718">
    <property type="taxonomic scope" value="Bacteria"/>
</dbReference>
<dbReference type="HOGENOM" id="CLU_140930_2_1_7"/>
<dbReference type="Proteomes" id="UP000001136">
    <property type="component" value="Chromosome"/>
</dbReference>
<dbReference type="GO" id="GO:0043590">
    <property type="term" value="C:bacterial nucleoid"/>
    <property type="evidence" value="ECO:0007669"/>
    <property type="project" value="UniProtKB-UniRule"/>
</dbReference>
<dbReference type="GO" id="GO:0005829">
    <property type="term" value="C:cytosol"/>
    <property type="evidence" value="ECO:0007669"/>
    <property type="project" value="TreeGrafter"/>
</dbReference>
<dbReference type="GO" id="GO:0003677">
    <property type="term" value="F:DNA binding"/>
    <property type="evidence" value="ECO:0007669"/>
    <property type="project" value="UniProtKB-UniRule"/>
</dbReference>
<dbReference type="Gene3D" id="3.30.1310.10">
    <property type="entry name" value="Nucleoid-associated protein YbaB-like domain"/>
    <property type="match status" value="1"/>
</dbReference>
<dbReference type="HAMAP" id="MF_00274">
    <property type="entry name" value="DNA_YbaB_EbfC"/>
    <property type="match status" value="1"/>
</dbReference>
<dbReference type="InterPro" id="IPR036894">
    <property type="entry name" value="YbaB-like_sf"/>
</dbReference>
<dbReference type="InterPro" id="IPR004401">
    <property type="entry name" value="YbaB/EbfC"/>
</dbReference>
<dbReference type="NCBIfam" id="TIGR00103">
    <property type="entry name" value="DNA_YbaB_EbfC"/>
    <property type="match status" value="1"/>
</dbReference>
<dbReference type="PANTHER" id="PTHR33449">
    <property type="entry name" value="NUCLEOID-ASSOCIATED PROTEIN YBAB"/>
    <property type="match status" value="1"/>
</dbReference>
<dbReference type="PANTHER" id="PTHR33449:SF1">
    <property type="entry name" value="NUCLEOID-ASSOCIATED PROTEIN YBAB"/>
    <property type="match status" value="1"/>
</dbReference>
<dbReference type="Pfam" id="PF02575">
    <property type="entry name" value="YbaB_DNA_bd"/>
    <property type="match status" value="1"/>
</dbReference>
<dbReference type="PIRSF" id="PIRSF004555">
    <property type="entry name" value="UCP004555"/>
    <property type="match status" value="1"/>
</dbReference>
<dbReference type="SUPFAM" id="SSF82607">
    <property type="entry name" value="YbaB-like"/>
    <property type="match status" value="1"/>
</dbReference>
<feature type="chain" id="PRO_1000059194" description="Nucleoid-associated protein Abu_0429">
    <location>
        <begin position="1"/>
        <end position="106"/>
    </location>
</feature>
<organism>
    <name type="scientific">Aliarcobacter butzleri (strain RM4018)</name>
    <name type="common">Arcobacter butzleri</name>
    <dbReference type="NCBI Taxonomy" id="367737"/>
    <lineage>
        <taxon>Bacteria</taxon>
        <taxon>Pseudomonadati</taxon>
        <taxon>Campylobacterota</taxon>
        <taxon>Epsilonproteobacteria</taxon>
        <taxon>Campylobacterales</taxon>
        <taxon>Arcobacteraceae</taxon>
        <taxon>Aliarcobacter</taxon>
    </lineage>
</organism>
<protein>
    <recommendedName>
        <fullName evidence="1">Nucleoid-associated protein Abu_0429</fullName>
    </recommendedName>
</protein>
<sequence length="106" mass="11606">MFDGLDLKNLNLGDMLNQFQDMAKNAQNENASRIFTSKAGGGMVEISINGNSEVVDLKIDDSLLEDKDSLQILLISCMNDVIKQSDENKKMMAMNLMGGLGSFGQK</sequence>
<name>Y429_ALIB4</name>
<reference key="1">
    <citation type="journal article" date="2007" name="PLoS ONE">
        <title>The complete genome sequence and analysis of the Epsilonproteobacterium Arcobacter butzleri.</title>
        <authorList>
            <person name="Miller W.G."/>
            <person name="Parker C.T."/>
            <person name="Rubenfield M."/>
            <person name="Mendz G.L."/>
            <person name="Woesten M.M.S.M."/>
            <person name="Ussery D.W."/>
            <person name="Stolz J.F."/>
            <person name="Binnewies T.T."/>
            <person name="Hallin P.F."/>
            <person name="Wang G."/>
            <person name="Malek J.A."/>
            <person name="Rogosin A."/>
            <person name="Stanker L.H."/>
            <person name="Mandrell R.E."/>
        </authorList>
    </citation>
    <scope>NUCLEOTIDE SEQUENCE [LARGE SCALE GENOMIC DNA]</scope>
    <source>
        <strain>RM4018</strain>
    </source>
</reference>